<sequence>MSDNIPAQREFDHERAEAAVRELLIAVGEDPDREGLRETPARVARAYAEVFAGLHQDPTEVLHKTFAEEHQELVLVRDIPIYSTCEHHLVPFYGTAHIGYIPGTDGHVTGLSKLARLADMYAKRPQVQERLTSQIADALVEVLHAQSVIVVIECEHLCMAMRGIRKPGATTTTSAVRGGFKKNAASRAEVMSLIRS</sequence>
<dbReference type="EC" id="3.5.4.16" evidence="1"/>
<dbReference type="EMBL" id="CP001601">
    <property type="protein sequence ID" value="ACP33834.1"/>
    <property type="molecule type" value="Genomic_DNA"/>
</dbReference>
<dbReference type="RefSeq" id="WP_010188819.1">
    <property type="nucleotide sequence ID" value="NC_012590.1"/>
</dbReference>
<dbReference type="SMR" id="C3PJE8"/>
<dbReference type="STRING" id="548476.cauri_2243"/>
<dbReference type="GeneID" id="31924893"/>
<dbReference type="KEGG" id="car:cauri_2243"/>
<dbReference type="eggNOG" id="COG0302">
    <property type="taxonomic scope" value="Bacteria"/>
</dbReference>
<dbReference type="HOGENOM" id="CLU_049768_3_3_11"/>
<dbReference type="OrthoDB" id="9801207at2"/>
<dbReference type="UniPathway" id="UPA00848">
    <property type="reaction ID" value="UER00151"/>
</dbReference>
<dbReference type="Proteomes" id="UP000002077">
    <property type="component" value="Chromosome"/>
</dbReference>
<dbReference type="GO" id="GO:0005737">
    <property type="term" value="C:cytoplasm"/>
    <property type="evidence" value="ECO:0007669"/>
    <property type="project" value="TreeGrafter"/>
</dbReference>
<dbReference type="GO" id="GO:0005525">
    <property type="term" value="F:GTP binding"/>
    <property type="evidence" value="ECO:0007669"/>
    <property type="project" value="UniProtKB-KW"/>
</dbReference>
<dbReference type="GO" id="GO:0003934">
    <property type="term" value="F:GTP cyclohydrolase I activity"/>
    <property type="evidence" value="ECO:0007669"/>
    <property type="project" value="UniProtKB-UniRule"/>
</dbReference>
<dbReference type="GO" id="GO:0008270">
    <property type="term" value="F:zinc ion binding"/>
    <property type="evidence" value="ECO:0007669"/>
    <property type="project" value="UniProtKB-UniRule"/>
</dbReference>
<dbReference type="GO" id="GO:0006730">
    <property type="term" value="P:one-carbon metabolic process"/>
    <property type="evidence" value="ECO:0007669"/>
    <property type="project" value="UniProtKB-UniRule"/>
</dbReference>
<dbReference type="GO" id="GO:0006729">
    <property type="term" value="P:tetrahydrobiopterin biosynthetic process"/>
    <property type="evidence" value="ECO:0007669"/>
    <property type="project" value="TreeGrafter"/>
</dbReference>
<dbReference type="GO" id="GO:0046654">
    <property type="term" value="P:tetrahydrofolate biosynthetic process"/>
    <property type="evidence" value="ECO:0007669"/>
    <property type="project" value="UniProtKB-UniRule"/>
</dbReference>
<dbReference type="FunFam" id="1.10.286.10:FF:000001">
    <property type="entry name" value="GTP cyclohydrolase 1"/>
    <property type="match status" value="1"/>
</dbReference>
<dbReference type="FunFam" id="3.30.1130.10:FF:000001">
    <property type="entry name" value="GTP cyclohydrolase 1"/>
    <property type="match status" value="1"/>
</dbReference>
<dbReference type="Gene3D" id="1.10.286.10">
    <property type="match status" value="1"/>
</dbReference>
<dbReference type="Gene3D" id="3.30.1130.10">
    <property type="match status" value="1"/>
</dbReference>
<dbReference type="HAMAP" id="MF_00223">
    <property type="entry name" value="FolE"/>
    <property type="match status" value="1"/>
</dbReference>
<dbReference type="InterPro" id="IPR043133">
    <property type="entry name" value="GTP-CH-I_C/QueF"/>
</dbReference>
<dbReference type="InterPro" id="IPR043134">
    <property type="entry name" value="GTP-CH-I_N"/>
</dbReference>
<dbReference type="InterPro" id="IPR001474">
    <property type="entry name" value="GTP_CycHdrlase_I"/>
</dbReference>
<dbReference type="InterPro" id="IPR018234">
    <property type="entry name" value="GTP_CycHdrlase_I_CS"/>
</dbReference>
<dbReference type="InterPro" id="IPR020602">
    <property type="entry name" value="GTP_CycHdrlase_I_dom"/>
</dbReference>
<dbReference type="NCBIfam" id="TIGR00063">
    <property type="entry name" value="folE"/>
    <property type="match status" value="1"/>
</dbReference>
<dbReference type="NCBIfam" id="NF006825">
    <property type="entry name" value="PRK09347.1-2"/>
    <property type="match status" value="1"/>
</dbReference>
<dbReference type="NCBIfam" id="NF006826">
    <property type="entry name" value="PRK09347.1-3"/>
    <property type="match status" value="1"/>
</dbReference>
<dbReference type="PANTHER" id="PTHR11109:SF7">
    <property type="entry name" value="GTP CYCLOHYDROLASE 1"/>
    <property type="match status" value="1"/>
</dbReference>
<dbReference type="PANTHER" id="PTHR11109">
    <property type="entry name" value="GTP CYCLOHYDROLASE I"/>
    <property type="match status" value="1"/>
</dbReference>
<dbReference type="Pfam" id="PF01227">
    <property type="entry name" value="GTP_cyclohydroI"/>
    <property type="match status" value="1"/>
</dbReference>
<dbReference type="SUPFAM" id="SSF55620">
    <property type="entry name" value="Tetrahydrobiopterin biosynthesis enzymes-like"/>
    <property type="match status" value="1"/>
</dbReference>
<dbReference type="PROSITE" id="PS00859">
    <property type="entry name" value="GTP_CYCLOHYDROL_1_1"/>
    <property type="match status" value="1"/>
</dbReference>
<dbReference type="PROSITE" id="PS00860">
    <property type="entry name" value="GTP_CYCLOHYDROL_1_2"/>
    <property type="match status" value="1"/>
</dbReference>
<gene>
    <name evidence="1" type="primary">folE</name>
    <name type="ordered locus">cauri_2243</name>
</gene>
<feature type="chain" id="PRO_1000124916" description="GTP cyclohydrolase 1">
    <location>
        <begin position="1"/>
        <end position="196"/>
    </location>
</feature>
<feature type="binding site" evidence="1">
    <location>
        <position position="85"/>
    </location>
    <ligand>
        <name>Zn(2+)</name>
        <dbReference type="ChEBI" id="CHEBI:29105"/>
    </ligand>
</feature>
<feature type="binding site" evidence="1">
    <location>
        <position position="88"/>
    </location>
    <ligand>
        <name>Zn(2+)</name>
        <dbReference type="ChEBI" id="CHEBI:29105"/>
    </ligand>
</feature>
<feature type="binding site" evidence="1">
    <location>
        <position position="158"/>
    </location>
    <ligand>
        <name>Zn(2+)</name>
        <dbReference type="ChEBI" id="CHEBI:29105"/>
    </ligand>
</feature>
<name>GCH1_CORA7</name>
<comment type="catalytic activity">
    <reaction evidence="1">
        <text>GTP + H2O = 7,8-dihydroneopterin 3'-triphosphate + formate + H(+)</text>
        <dbReference type="Rhea" id="RHEA:17473"/>
        <dbReference type="ChEBI" id="CHEBI:15377"/>
        <dbReference type="ChEBI" id="CHEBI:15378"/>
        <dbReference type="ChEBI" id="CHEBI:15740"/>
        <dbReference type="ChEBI" id="CHEBI:37565"/>
        <dbReference type="ChEBI" id="CHEBI:58462"/>
        <dbReference type="EC" id="3.5.4.16"/>
    </reaction>
</comment>
<comment type="pathway">
    <text evidence="1">Cofactor biosynthesis; 7,8-dihydroneopterin triphosphate biosynthesis; 7,8-dihydroneopterin triphosphate from GTP: step 1/1.</text>
</comment>
<comment type="subunit">
    <text evidence="1">Homomer.</text>
</comment>
<comment type="similarity">
    <text evidence="1">Belongs to the GTP cyclohydrolase I family.</text>
</comment>
<accession>C3PJE8</accession>
<organism>
    <name type="scientific">Corynebacterium aurimucosum (strain ATCC 700975 / DSM 44827 / CIP 107346 / CN-1)</name>
    <name type="common">Corynebacterium nigricans</name>
    <dbReference type="NCBI Taxonomy" id="548476"/>
    <lineage>
        <taxon>Bacteria</taxon>
        <taxon>Bacillati</taxon>
        <taxon>Actinomycetota</taxon>
        <taxon>Actinomycetes</taxon>
        <taxon>Mycobacteriales</taxon>
        <taxon>Corynebacteriaceae</taxon>
        <taxon>Corynebacterium</taxon>
    </lineage>
</organism>
<protein>
    <recommendedName>
        <fullName evidence="1">GTP cyclohydrolase 1</fullName>
        <ecNumber evidence="1">3.5.4.16</ecNumber>
    </recommendedName>
    <alternativeName>
        <fullName evidence="1">GTP cyclohydrolase I</fullName>
        <shortName evidence="1">GTP-CH-I</shortName>
    </alternativeName>
</protein>
<evidence type="ECO:0000255" key="1">
    <source>
        <dbReference type="HAMAP-Rule" id="MF_00223"/>
    </source>
</evidence>
<proteinExistence type="inferred from homology"/>
<keyword id="KW-0342">GTP-binding</keyword>
<keyword id="KW-0378">Hydrolase</keyword>
<keyword id="KW-0479">Metal-binding</keyword>
<keyword id="KW-0547">Nucleotide-binding</keyword>
<keyword id="KW-0554">One-carbon metabolism</keyword>
<keyword id="KW-1185">Reference proteome</keyword>
<keyword id="KW-0862">Zinc</keyword>
<reference key="1">
    <citation type="journal article" date="2010" name="BMC Genomics">
        <title>Complete genome sequence and lifestyle of black-pigmented Corynebacterium aurimucosum ATCC 700975 (formerly C. nigricans CN-1) isolated from a vaginal swab of a woman with spontaneous abortion.</title>
        <authorList>
            <person name="Trost E."/>
            <person name="Gotker S."/>
            <person name="Schneider J."/>
            <person name="Schneiker-Bekel S."/>
            <person name="Szczepanowski R."/>
            <person name="Tilker A."/>
            <person name="Viehoever P."/>
            <person name="Arnold W."/>
            <person name="Bekel T."/>
            <person name="Blom J."/>
            <person name="Gartemann K.H."/>
            <person name="Linke B."/>
            <person name="Goesmann A."/>
            <person name="Puhler A."/>
            <person name="Shukla S.K."/>
            <person name="Tauch A."/>
        </authorList>
    </citation>
    <scope>NUCLEOTIDE SEQUENCE [LARGE SCALE GENOMIC DNA]</scope>
    <source>
        <strain>ATCC 700975 / DSM 44827 / CIP 107346 / CN-1</strain>
    </source>
</reference>